<accession>Q6G512</accession>
<name>RS21_BARHE</name>
<gene>
    <name evidence="1" type="primary">rpsU</name>
    <name type="ordered locus">BH01320</name>
</gene>
<proteinExistence type="inferred from homology"/>
<organism>
    <name type="scientific">Bartonella henselae (strain ATCC 49882 / DSM 28221 / CCUG 30454 / Houston 1)</name>
    <name type="common">Rochalimaea henselae</name>
    <dbReference type="NCBI Taxonomy" id="283166"/>
    <lineage>
        <taxon>Bacteria</taxon>
        <taxon>Pseudomonadati</taxon>
        <taxon>Pseudomonadota</taxon>
        <taxon>Alphaproteobacteria</taxon>
        <taxon>Hyphomicrobiales</taxon>
        <taxon>Bartonellaceae</taxon>
        <taxon>Bartonella</taxon>
    </lineage>
</organism>
<comment type="similarity">
    <text evidence="1">Belongs to the bacterial ribosomal protein bS21 family.</text>
</comment>
<protein>
    <recommendedName>
        <fullName evidence="1">Small ribosomal subunit protein bS21</fullName>
    </recommendedName>
    <alternativeName>
        <fullName evidence="3">30S ribosomal protein S21</fullName>
    </alternativeName>
</protein>
<reference key="1">
    <citation type="journal article" date="2004" name="Proc. Natl. Acad. Sci. U.S.A.">
        <title>The louse-borne human pathogen Bartonella quintana is a genomic derivative of the zoonotic agent Bartonella henselae.</title>
        <authorList>
            <person name="Alsmark U.C.M."/>
            <person name="Frank A.C."/>
            <person name="Karlberg E.O."/>
            <person name="Legault B.-A."/>
            <person name="Ardell D.H."/>
            <person name="Canbaeck B."/>
            <person name="Eriksson A.-S."/>
            <person name="Naeslund A.K."/>
            <person name="Handley S.A."/>
            <person name="Huvet M."/>
            <person name="La Scola B."/>
            <person name="Holmberg M."/>
            <person name="Andersson S.G.E."/>
        </authorList>
    </citation>
    <scope>NUCLEOTIDE SEQUENCE [LARGE SCALE GENOMIC DNA]</scope>
    <source>
        <strain>ATCC 49882 / DSM 28221 / CCUG 30454 / Houston 1</strain>
    </source>
</reference>
<sequence length="77" mass="9115">MQVLVRDNNVDQALRALKKKMQREGIFREMKMRGYYEKPSEKRAREKAEAVRRTRKLARKRAQREGLISNGRGSPLK</sequence>
<dbReference type="EMBL" id="BX897699">
    <property type="protein sequence ID" value="CAF26947.1"/>
    <property type="molecule type" value="Genomic_DNA"/>
</dbReference>
<dbReference type="RefSeq" id="WP_011180089.1">
    <property type="nucleotide sequence ID" value="NZ_LRIJ02000001.1"/>
</dbReference>
<dbReference type="SMR" id="Q6G512"/>
<dbReference type="PaxDb" id="283166-BH01320"/>
<dbReference type="EnsemblBacteria" id="CAF26947">
    <property type="protein sequence ID" value="CAF26947"/>
    <property type="gene ID" value="BH01320"/>
</dbReference>
<dbReference type="GeneID" id="92986415"/>
<dbReference type="KEGG" id="bhe:BH01320"/>
<dbReference type="eggNOG" id="COG0828">
    <property type="taxonomic scope" value="Bacteria"/>
</dbReference>
<dbReference type="OrthoDB" id="9811907at2"/>
<dbReference type="Proteomes" id="UP000000421">
    <property type="component" value="Chromosome"/>
</dbReference>
<dbReference type="GO" id="GO:1990904">
    <property type="term" value="C:ribonucleoprotein complex"/>
    <property type="evidence" value="ECO:0007669"/>
    <property type="project" value="UniProtKB-KW"/>
</dbReference>
<dbReference type="GO" id="GO:0005840">
    <property type="term" value="C:ribosome"/>
    <property type="evidence" value="ECO:0007669"/>
    <property type="project" value="UniProtKB-KW"/>
</dbReference>
<dbReference type="GO" id="GO:0003735">
    <property type="term" value="F:structural constituent of ribosome"/>
    <property type="evidence" value="ECO:0007669"/>
    <property type="project" value="InterPro"/>
</dbReference>
<dbReference type="GO" id="GO:0006412">
    <property type="term" value="P:translation"/>
    <property type="evidence" value="ECO:0007669"/>
    <property type="project" value="UniProtKB-UniRule"/>
</dbReference>
<dbReference type="Gene3D" id="1.20.5.1150">
    <property type="entry name" value="Ribosomal protein S8"/>
    <property type="match status" value="1"/>
</dbReference>
<dbReference type="HAMAP" id="MF_00358">
    <property type="entry name" value="Ribosomal_bS21"/>
    <property type="match status" value="1"/>
</dbReference>
<dbReference type="InterPro" id="IPR001911">
    <property type="entry name" value="Ribosomal_bS21"/>
</dbReference>
<dbReference type="InterPro" id="IPR018278">
    <property type="entry name" value="Ribosomal_bS21_CS"/>
</dbReference>
<dbReference type="InterPro" id="IPR038380">
    <property type="entry name" value="Ribosomal_bS21_sf"/>
</dbReference>
<dbReference type="NCBIfam" id="TIGR00030">
    <property type="entry name" value="S21p"/>
    <property type="match status" value="1"/>
</dbReference>
<dbReference type="PANTHER" id="PTHR21109">
    <property type="entry name" value="MITOCHONDRIAL 28S RIBOSOMAL PROTEIN S21"/>
    <property type="match status" value="1"/>
</dbReference>
<dbReference type="PANTHER" id="PTHR21109:SF0">
    <property type="entry name" value="SMALL RIBOSOMAL SUBUNIT PROTEIN BS21M"/>
    <property type="match status" value="1"/>
</dbReference>
<dbReference type="Pfam" id="PF01165">
    <property type="entry name" value="Ribosomal_S21"/>
    <property type="match status" value="1"/>
</dbReference>
<dbReference type="PRINTS" id="PR00976">
    <property type="entry name" value="RIBOSOMALS21"/>
</dbReference>
<dbReference type="PROSITE" id="PS01181">
    <property type="entry name" value="RIBOSOMAL_S21"/>
    <property type="match status" value="1"/>
</dbReference>
<feature type="chain" id="PRO_0000178302" description="Small ribosomal subunit protein bS21">
    <location>
        <begin position="1"/>
        <end position="77"/>
    </location>
</feature>
<feature type="region of interest" description="Disordered" evidence="2">
    <location>
        <begin position="38"/>
        <end position="77"/>
    </location>
</feature>
<feature type="compositionally biased region" description="Basic and acidic residues" evidence="2">
    <location>
        <begin position="38"/>
        <end position="52"/>
    </location>
</feature>
<feature type="compositionally biased region" description="Basic residues" evidence="2">
    <location>
        <begin position="53"/>
        <end position="62"/>
    </location>
</feature>
<keyword id="KW-0687">Ribonucleoprotein</keyword>
<keyword id="KW-0689">Ribosomal protein</keyword>
<evidence type="ECO:0000255" key="1">
    <source>
        <dbReference type="HAMAP-Rule" id="MF_00358"/>
    </source>
</evidence>
<evidence type="ECO:0000256" key="2">
    <source>
        <dbReference type="SAM" id="MobiDB-lite"/>
    </source>
</evidence>
<evidence type="ECO:0000305" key="3"/>